<gene>
    <name evidence="1" type="primary">rlmG</name>
    <name type="ORF">PHA56</name>
</gene>
<feature type="chain" id="PRO_0000366484" description="Ribosomal RNA large subunit methyltransferase G">
    <location>
        <begin position="1"/>
        <end position="374"/>
    </location>
</feature>
<name>RLMG_PSESH</name>
<organism>
    <name type="scientific">Pseudomonas savastanoi pv. phaseolicola</name>
    <name type="common">Pseudomonas syringae pv. phaseolicola</name>
    <dbReference type="NCBI Taxonomy" id="319"/>
    <lineage>
        <taxon>Bacteria</taxon>
        <taxon>Pseudomonadati</taxon>
        <taxon>Pseudomonadota</taxon>
        <taxon>Gammaproteobacteria</taxon>
        <taxon>Pseudomonadales</taxon>
        <taxon>Pseudomonadaceae</taxon>
        <taxon>Pseudomonas</taxon>
    </lineage>
</organism>
<accession>Q0EDR2</accession>
<reference key="1">
    <citation type="journal article" date="2006" name="J. Mol. Evol.">
        <title>Comparative analysis of argK-tox clusters and their flanking regions in phaseolotoxin-producing Pseudomonas syringae pathovars.</title>
        <authorList>
            <person name="Genka H."/>
            <person name="Baba T."/>
            <person name="Tsuda M."/>
            <person name="Kanaya S."/>
            <person name="Mori H."/>
            <person name="Yoshida T."/>
            <person name="Noguchi M.T."/>
            <person name="Tsuchiya K."/>
            <person name="Sawada H."/>
        </authorList>
    </citation>
    <scope>NUCLEOTIDE SEQUENCE [GENOMIC DNA]</scope>
    <source>
        <strain>MAFF 302282</strain>
    </source>
</reference>
<keyword id="KW-0963">Cytoplasm</keyword>
<keyword id="KW-0489">Methyltransferase</keyword>
<keyword id="KW-0698">rRNA processing</keyword>
<keyword id="KW-0949">S-adenosyl-L-methionine</keyword>
<keyword id="KW-0808">Transferase</keyword>
<evidence type="ECO:0000255" key="1">
    <source>
        <dbReference type="HAMAP-Rule" id="MF_01859"/>
    </source>
</evidence>
<protein>
    <recommendedName>
        <fullName evidence="1">Ribosomal RNA large subunit methyltransferase G</fullName>
        <ecNumber evidence="1">2.1.1.174</ecNumber>
    </recommendedName>
    <alternativeName>
        <fullName evidence="1">23S rRNA m2G1835 methyltransferase</fullName>
    </alternativeName>
    <alternativeName>
        <fullName evidence="1">rRNA (guanine-N(2)-)-methyltransferase RlmG</fullName>
    </alternativeName>
</protein>
<dbReference type="EC" id="2.1.1.174" evidence="1"/>
<dbReference type="EMBL" id="AB237164">
    <property type="protein sequence ID" value="BAF32922.1"/>
    <property type="molecule type" value="Genomic_DNA"/>
</dbReference>
<dbReference type="RefSeq" id="WP_041924638.1">
    <property type="nucleotide sequence ID" value="NZ_RBUR01000216.1"/>
</dbReference>
<dbReference type="SMR" id="Q0EDR2"/>
<dbReference type="GO" id="GO:0005737">
    <property type="term" value="C:cytoplasm"/>
    <property type="evidence" value="ECO:0007669"/>
    <property type="project" value="UniProtKB-SubCell"/>
</dbReference>
<dbReference type="GO" id="GO:0052916">
    <property type="term" value="F:23S rRNA (guanine(1835)-N(2))-methyltransferase activity"/>
    <property type="evidence" value="ECO:0007669"/>
    <property type="project" value="UniProtKB-EC"/>
</dbReference>
<dbReference type="GO" id="GO:0003676">
    <property type="term" value="F:nucleic acid binding"/>
    <property type="evidence" value="ECO:0007669"/>
    <property type="project" value="InterPro"/>
</dbReference>
<dbReference type="CDD" id="cd02440">
    <property type="entry name" value="AdoMet_MTases"/>
    <property type="match status" value="1"/>
</dbReference>
<dbReference type="Gene3D" id="3.40.50.150">
    <property type="entry name" value="Vaccinia Virus protein VP39"/>
    <property type="match status" value="2"/>
</dbReference>
<dbReference type="HAMAP" id="MF_01859">
    <property type="entry name" value="23SrRNA_methyltr_G"/>
    <property type="match status" value="1"/>
</dbReference>
<dbReference type="InterPro" id="IPR002052">
    <property type="entry name" value="DNA_methylase_N6_adenine_CS"/>
</dbReference>
<dbReference type="InterPro" id="IPR017237">
    <property type="entry name" value="rRNA_m2G-MeTrfase_RlmG"/>
</dbReference>
<dbReference type="InterPro" id="IPR046977">
    <property type="entry name" value="RsmC/RlmG"/>
</dbReference>
<dbReference type="InterPro" id="IPR029063">
    <property type="entry name" value="SAM-dependent_MTases_sf"/>
</dbReference>
<dbReference type="InterPro" id="IPR007848">
    <property type="entry name" value="Small_mtfrase_dom"/>
</dbReference>
<dbReference type="PANTHER" id="PTHR47816:SF5">
    <property type="entry name" value="RIBOSOMAL RNA LARGE SUBUNIT METHYLTRANSFERASE G"/>
    <property type="match status" value="1"/>
</dbReference>
<dbReference type="PANTHER" id="PTHR47816">
    <property type="entry name" value="RIBOSOMAL RNA SMALL SUBUNIT METHYLTRANSFERASE C"/>
    <property type="match status" value="1"/>
</dbReference>
<dbReference type="Pfam" id="PF05175">
    <property type="entry name" value="MTS"/>
    <property type="match status" value="1"/>
</dbReference>
<dbReference type="PIRSF" id="PIRSF037565">
    <property type="entry name" value="RRNA_m2G_Mtase_RsmD_prd"/>
    <property type="match status" value="1"/>
</dbReference>
<dbReference type="SUPFAM" id="SSF53335">
    <property type="entry name" value="S-adenosyl-L-methionine-dependent methyltransferases"/>
    <property type="match status" value="1"/>
</dbReference>
<proteinExistence type="inferred from homology"/>
<sequence>MPLLISPFAELDLIRQPEQQDEPLQAFDAADEYLLNHVAETGLSLQSRVLVLNDSFGALAASLASHATVVSSTDSFLAAQGLEKNLARNGMSYDAVPHIPASEPLSGPFDWVLIRVPKTLALLEEQLIRLQGQLAPGARVVAAAMVKHLPRSAGDLLEEYVGPVQASLAVKKARLLFATPQPMEVRTSPYPTRYRLDEPAIELLNHANVFCRDGLDIGTRAFLPYLPKNLGTARVADLGCGNGVLAIASALDNPQAHYTLVDESFMAVQSAAENWRATLGERVVEVRAADGLDTQEPDSLDVVLCNPPFHQQQVVGDFLAWRMFLQARAALVNGGALYIVGNRHLGYHTKLSRLFRGVEQVAATPKFVILKARK</sequence>
<comment type="function">
    <text evidence="1">Specifically methylates the guanine in position 1835 (m2G1835) of 23S rRNA.</text>
</comment>
<comment type="catalytic activity">
    <reaction evidence="1">
        <text>guanosine(1835) in 23S rRNA + S-adenosyl-L-methionine = N(2)-methylguanosine(1835) in 23S rRNA + S-adenosyl-L-homocysteine + H(+)</text>
        <dbReference type="Rhea" id="RHEA:42744"/>
        <dbReference type="Rhea" id="RHEA-COMP:10217"/>
        <dbReference type="Rhea" id="RHEA-COMP:10218"/>
        <dbReference type="ChEBI" id="CHEBI:15378"/>
        <dbReference type="ChEBI" id="CHEBI:57856"/>
        <dbReference type="ChEBI" id="CHEBI:59789"/>
        <dbReference type="ChEBI" id="CHEBI:74269"/>
        <dbReference type="ChEBI" id="CHEBI:74481"/>
        <dbReference type="EC" id="2.1.1.174"/>
    </reaction>
</comment>
<comment type="subcellular location">
    <subcellularLocation>
        <location evidence="1">Cytoplasm</location>
    </subcellularLocation>
</comment>
<comment type="similarity">
    <text evidence="1">Belongs to the methyltransferase superfamily. RlmG family.</text>
</comment>